<keyword id="KW-0002">3D-structure</keyword>
<keyword id="KW-0067">ATP-binding</keyword>
<keyword id="KW-0963">Cytoplasm</keyword>
<keyword id="KW-0347">Helicase</keyword>
<keyword id="KW-0378">Hydrolase</keyword>
<keyword id="KW-0507">mRNA processing</keyword>
<keyword id="KW-0509">mRNA transport</keyword>
<keyword id="KW-0547">Nucleotide-binding</keyword>
<keyword id="KW-1185">Reference proteome</keyword>
<keyword id="KW-0694">RNA-binding</keyword>
<keyword id="KW-0810">Translation regulation</keyword>
<keyword id="KW-0813">Transport</keyword>
<gene>
    <name evidence="18" type="primary">DHH1</name>
    <name evidence="20" type="ordered locus">YDL160C</name>
</gene>
<protein>
    <recommendedName>
        <fullName evidence="19">ATP-dependent RNA helicase DHH1</fullName>
        <ecNumber evidence="19">3.6.4.13</ecNumber>
    </recommendedName>
    <alternativeName>
        <fullName evidence="18">DExD/H-box helicase 1</fullName>
    </alternativeName>
</protein>
<sequence>MGSINNNFNTNNNSNTDLDRDWKTALNIPKKDTRPQTDDVLNTKGNTFEDFYLKRELLMGIFEAGFEKPSPIQEEAIPVAITGRDILARAKNGTGKTAAFVIPTLEKVKPKLNKIQALIMVPTRELALQTSQVVRTLGKHCGISCMVTTGGTNLRDDILRLNETVHILVGTPGRVLDLASRKVADLSDCSLFIMDEADKMLSRDFKTIIEQILSFLPPTHQSLLFSATFPLTVKEFMVKHLHKPYEINLMEELTLKGITQYYAFVEERQKLHCLNTLFSKLQINQAIIFCNSTNRVELLAKKITDLGYSCYYSHARMKQQERNKVFHEFRQGKVRTLVCSDLLTRGIDIQAVNVVINFDFPKTAETYLHRIGRSGRFGHLGLAINLINWNDRFNLYKIEQELGTEIAAIPATIDKSLYVAENDETVPVPFPIEQQSYHQQAIPQQQLPSQQQFAIPPQQHHPQFMVPPSHQQQQAYPPPQMPSQQGYPPQQEHFMAMPPGQSQPQY</sequence>
<comment type="function">
    <text evidence="4 5 6 7 8 11 12 13 16">ATP-dependent RNA helicase involved in mRNA turnover, and more specifically in mRNA decapping by activating the decapping enzyme DCP1 (PubMed:11696541, PubMed:11780629, PubMed:12032091, PubMed:12730603, PubMed:15703442, PubMed:15706350). Is involved in G1/S DNA-damage checkpoint recovery, probably through the regulation of the translational status of a subset of mRNAs (PubMed:15166134). May also have a role in translation and mRNA nuclear export (PubMed:12930949). Required for sporulation (PubMed:12930949). Blocks autophagy in nutrient-rich conditions by, at least partly, binding and repressing the expression of a set of ATG genes, including ATG3, ATG7, ATG8, ATG19, ATG20, ATG22 and SNX4/ATG24 (PubMed:26098573).</text>
</comment>
<comment type="catalytic activity">
    <reaction evidence="19">
        <text>ATP + H2O = ADP + phosphate + H(+)</text>
        <dbReference type="Rhea" id="RHEA:13065"/>
        <dbReference type="ChEBI" id="CHEBI:15377"/>
        <dbReference type="ChEBI" id="CHEBI:15378"/>
        <dbReference type="ChEBI" id="CHEBI:30616"/>
        <dbReference type="ChEBI" id="CHEBI:43474"/>
        <dbReference type="ChEBI" id="CHEBI:456216"/>
        <dbReference type="EC" id="3.6.4.13"/>
    </reaction>
</comment>
<comment type="subunit">
    <text evidence="4 5 6 8 15 17">Associated with the CCR4-NOT complex and possibly other big complexes (PubMed:12930949, PubMed:9504907). Interacts with CDC39/NOT1 (PubMed:11696541). Interacts with DCP1, LSM1, and POP2 (PubMed:11780629, PubMed:9504907). Interacts with IGO1 (PubMed:20471941). Interacts with PAT1 and with KEM1, the major 5'-3' exonuclease (PubMed:11780629, PubMed:12032091).</text>
</comment>
<comment type="interaction">
    <interactant intactId="EBI-158">
        <id>P39517</id>
    </interactant>
    <interactant intactId="EBI-38519">
        <id>Q12517</id>
        <label>DCP1</label>
    </interactant>
    <organismsDiffer>false</organismsDiffer>
    <experiments>3</experiments>
</comment>
<comment type="interaction">
    <interactant intactId="EBI-158">
        <id>P39517</id>
    </interactant>
    <interactant intactId="EBI-22300">
        <id>P39998</id>
        <label>EDC3</label>
    </interactant>
    <organismsDiffer>false</organismsDiffer>
    <experiments>3</experiments>
</comment>
<comment type="interaction">
    <interactant intactId="EBI-158">
        <id>P39517</id>
    </interactant>
    <interactant intactId="EBI-174">
        <id>P47017</id>
        <label>LSM1</label>
    </interactant>
    <organismsDiffer>false</organismsDiffer>
    <experiments>2</experiments>
</comment>
<comment type="interaction">
    <interactant intactId="EBI-158">
        <id>P39517</id>
    </interactant>
    <interactant intactId="EBI-180">
        <id>P38203</id>
        <label>LSM2</label>
    </interactant>
    <organismsDiffer>false</organismsDiffer>
    <experiments>4</experiments>
</comment>
<comment type="interaction">
    <interactant intactId="EBI-158">
        <id>P39517</id>
    </interactant>
    <interactant intactId="EBI-10227">
        <id>P57743</id>
        <label>LSM3</label>
    </interactant>
    <organismsDiffer>false</organismsDiffer>
    <experiments>3</experiments>
</comment>
<comment type="interaction">
    <interactant intactId="EBI-158">
        <id>P39517</id>
    </interactant>
    <interactant intactId="EBI-188">
        <id>P40070</id>
        <label>LSM4</label>
    </interactant>
    <organismsDiffer>false</organismsDiffer>
    <experiments>3</experiments>
</comment>
<comment type="interaction">
    <interactant intactId="EBI-158">
        <id>P39517</id>
    </interactant>
    <interactant intactId="EBI-141">
        <id>P53905</id>
        <label>LSM7</label>
    </interactant>
    <organismsDiffer>false</organismsDiffer>
    <experiments>3</experiments>
</comment>
<comment type="interaction">
    <interactant intactId="EBI-158">
        <id>P39517</id>
    </interactant>
    <interactant intactId="EBI-2052996">
        <id>P39016</id>
        <label>MPT5</label>
    </interactant>
    <organismsDiffer>false</organismsDiffer>
    <experiments>3</experiments>
</comment>
<comment type="interaction">
    <interactant intactId="EBI-158">
        <id>P39517</id>
    </interactant>
    <interactant intactId="EBI-204">
        <id>P25644</id>
        <label>PAT1</label>
    </interactant>
    <organismsDiffer>false</organismsDiffer>
    <experiments>8</experiments>
</comment>
<comment type="interaction">
    <interactant intactId="EBI-158">
        <id>P39517</id>
    </interactant>
    <interactant intactId="EBI-13629">
        <id>P39008</id>
        <label>POP2</label>
    </interactant>
    <organismsDiffer>false</organismsDiffer>
    <experiments>3</experiments>
</comment>
<comment type="subcellular location">
    <subcellularLocation>
        <location evidence="6 7 8 9 13">Cytoplasm</location>
        <location evidence="6 7 8 9 13">P-body</location>
    </subcellularLocation>
</comment>
<comment type="domain">
    <text>The Q motif is unique to and characteristic of the DEAD box family of RNA helicases and controls ATP binding and hydrolysis.</text>
</comment>
<comment type="disruption phenotype">
    <text evidence="16">Leads to an increased in autophagy flux (PubMed:26098573). Causes an accumulation of ATG3, ATG7, ATG8, ATG19, ATG20, ATG22 and SNX4/ATG24 transcripts in nutrient-replete conditions (PubMed:26098573).</text>
</comment>
<comment type="miscellaneous">
    <text evidence="10">Present with 42900 molecules/cell in log phase SD medium.</text>
</comment>
<comment type="similarity">
    <text evidence="19">Belongs to the DEAD box helicase family. DDX6/DHH1 subfamily.</text>
</comment>
<name>DHH1_YEAST</name>
<reference key="1">
    <citation type="journal article" date="1993" name="Yeast">
        <title>A yeast gene encoding a putative RNA helicase of the 'DEAD'-box family.</title>
        <authorList>
            <person name="Strahl-Bolsinger S."/>
            <person name="Tanner W."/>
        </authorList>
    </citation>
    <scope>NUCLEOTIDE SEQUENCE [GENOMIC DNA]</scope>
</reference>
<reference key="2">
    <citation type="journal article" date="1997" name="Nature">
        <title>The nucleotide sequence of Saccharomyces cerevisiae chromosome IV.</title>
        <authorList>
            <person name="Jacq C."/>
            <person name="Alt-Moerbe J."/>
            <person name="Andre B."/>
            <person name="Arnold W."/>
            <person name="Bahr A."/>
            <person name="Ballesta J.P.G."/>
            <person name="Bargues M."/>
            <person name="Baron L."/>
            <person name="Becker A."/>
            <person name="Biteau N."/>
            <person name="Bloecker H."/>
            <person name="Blugeon C."/>
            <person name="Boskovic J."/>
            <person name="Brandt P."/>
            <person name="Brueckner M."/>
            <person name="Buitrago M.J."/>
            <person name="Coster F."/>
            <person name="Delaveau T."/>
            <person name="del Rey F."/>
            <person name="Dujon B."/>
            <person name="Eide L.G."/>
            <person name="Garcia-Cantalejo J.M."/>
            <person name="Goffeau A."/>
            <person name="Gomez-Peris A."/>
            <person name="Granotier C."/>
            <person name="Hanemann V."/>
            <person name="Hankeln T."/>
            <person name="Hoheisel J.D."/>
            <person name="Jaeger W."/>
            <person name="Jimenez A."/>
            <person name="Jonniaux J.-L."/>
            <person name="Kraemer C."/>
            <person name="Kuester H."/>
            <person name="Laamanen P."/>
            <person name="Legros Y."/>
            <person name="Louis E.J."/>
            <person name="Moeller-Rieker S."/>
            <person name="Monnet A."/>
            <person name="Moro M."/>
            <person name="Mueller-Auer S."/>
            <person name="Nussbaumer B."/>
            <person name="Paricio N."/>
            <person name="Paulin L."/>
            <person name="Perea J."/>
            <person name="Perez-Alonso M."/>
            <person name="Perez-Ortin J.E."/>
            <person name="Pohl T.M."/>
            <person name="Prydz H."/>
            <person name="Purnelle B."/>
            <person name="Rasmussen S.W."/>
            <person name="Remacha M.A."/>
            <person name="Revuelta J.L."/>
            <person name="Rieger M."/>
            <person name="Salom D."/>
            <person name="Saluz H.P."/>
            <person name="Saiz J.E."/>
            <person name="Saren A.-M."/>
            <person name="Schaefer M."/>
            <person name="Scharfe M."/>
            <person name="Schmidt E.R."/>
            <person name="Schneider C."/>
            <person name="Scholler P."/>
            <person name="Schwarz S."/>
            <person name="Soler-Mira A."/>
            <person name="Urrestarazu L.A."/>
            <person name="Verhasselt P."/>
            <person name="Vissers S."/>
            <person name="Voet M."/>
            <person name="Volckaert G."/>
            <person name="Wagner G."/>
            <person name="Wambutt R."/>
            <person name="Wedler E."/>
            <person name="Wedler H."/>
            <person name="Woelfl S."/>
            <person name="Harris D.E."/>
            <person name="Bowman S."/>
            <person name="Brown D."/>
            <person name="Churcher C.M."/>
            <person name="Connor R."/>
            <person name="Dedman K."/>
            <person name="Gentles S."/>
            <person name="Hamlin N."/>
            <person name="Hunt S."/>
            <person name="Jones L."/>
            <person name="McDonald S."/>
            <person name="Murphy L.D."/>
            <person name="Niblett D."/>
            <person name="Odell C."/>
            <person name="Oliver K."/>
            <person name="Rajandream M.A."/>
            <person name="Richards C."/>
            <person name="Shore L."/>
            <person name="Walsh S.V."/>
            <person name="Barrell B.G."/>
            <person name="Dietrich F.S."/>
            <person name="Mulligan J.T."/>
            <person name="Allen E."/>
            <person name="Araujo R."/>
            <person name="Aviles E."/>
            <person name="Berno A."/>
            <person name="Carpenter J."/>
            <person name="Chen E."/>
            <person name="Cherry J.M."/>
            <person name="Chung E."/>
            <person name="Duncan M."/>
            <person name="Hunicke-Smith S."/>
            <person name="Hyman R.W."/>
            <person name="Komp C."/>
            <person name="Lashkari D."/>
            <person name="Lew H."/>
            <person name="Lin D."/>
            <person name="Mosedale D."/>
            <person name="Nakahara K."/>
            <person name="Namath A."/>
            <person name="Oefner P."/>
            <person name="Oh C."/>
            <person name="Petel F.X."/>
            <person name="Roberts D."/>
            <person name="Schramm S."/>
            <person name="Schroeder M."/>
            <person name="Shogren T."/>
            <person name="Shroff N."/>
            <person name="Winant A."/>
            <person name="Yelton M.A."/>
            <person name="Botstein D."/>
            <person name="Davis R.W."/>
            <person name="Johnston M."/>
            <person name="Andrews S."/>
            <person name="Brinkman R."/>
            <person name="Cooper J."/>
            <person name="Ding H."/>
            <person name="Du Z."/>
            <person name="Favello A."/>
            <person name="Fulton L."/>
            <person name="Gattung S."/>
            <person name="Greco T."/>
            <person name="Hallsworth K."/>
            <person name="Hawkins J."/>
            <person name="Hillier L.W."/>
            <person name="Jier M."/>
            <person name="Johnson D."/>
            <person name="Johnston L."/>
            <person name="Kirsten J."/>
            <person name="Kucaba T."/>
            <person name="Langston Y."/>
            <person name="Latreille P."/>
            <person name="Le T."/>
            <person name="Mardis E."/>
            <person name="Menezes S."/>
            <person name="Miller N."/>
            <person name="Nhan M."/>
            <person name="Pauley A."/>
            <person name="Peluso D."/>
            <person name="Rifkin L."/>
            <person name="Riles L."/>
            <person name="Taich A."/>
            <person name="Trevaskis E."/>
            <person name="Vignati D."/>
            <person name="Wilcox L."/>
            <person name="Wohldman P."/>
            <person name="Vaudin M."/>
            <person name="Wilson R."/>
            <person name="Waterston R."/>
            <person name="Albermann K."/>
            <person name="Hani J."/>
            <person name="Heumann K."/>
            <person name="Kleine K."/>
            <person name="Mewes H.-W."/>
            <person name="Zollner A."/>
            <person name="Zaccaria P."/>
        </authorList>
    </citation>
    <scope>NUCLEOTIDE SEQUENCE [LARGE SCALE GENOMIC DNA]</scope>
    <source>
        <strain>ATCC 204508 / S288c</strain>
    </source>
</reference>
<reference key="3">
    <citation type="journal article" date="2014" name="G3 (Bethesda)">
        <title>The reference genome sequence of Saccharomyces cerevisiae: Then and now.</title>
        <authorList>
            <person name="Engel S.R."/>
            <person name="Dietrich F.S."/>
            <person name="Fisk D.G."/>
            <person name="Binkley G."/>
            <person name="Balakrishnan R."/>
            <person name="Costanzo M.C."/>
            <person name="Dwight S.S."/>
            <person name="Hitz B.C."/>
            <person name="Karra K."/>
            <person name="Nash R.S."/>
            <person name="Weng S."/>
            <person name="Wong E.D."/>
            <person name="Lloyd P."/>
            <person name="Skrzypek M.S."/>
            <person name="Miyasato S.R."/>
            <person name="Simison M."/>
            <person name="Cherry J.M."/>
        </authorList>
    </citation>
    <scope>GENOME REANNOTATION</scope>
    <source>
        <strain>ATCC 204508 / S288c</strain>
    </source>
</reference>
<reference key="4">
    <citation type="journal article" date="1998" name="Genetics">
        <title>Dhh1p, a putative RNA helicase, associates with the general transcription factors Pop2p and Ccr4p from Saccharomyces cerevisiae.</title>
        <authorList>
            <person name="Hata H."/>
            <person name="Mitsui H."/>
            <person name="Liu H."/>
            <person name="Bai Y."/>
            <person name="Denis C.L."/>
            <person name="Shimizu Y."/>
            <person name="Sakai A."/>
        </authorList>
    </citation>
    <scope>INTERACTION WITH POP2</scope>
    <scope>ASSOCIATION WITH THE CCR4-NOT COMPLEX</scope>
</reference>
<reference key="5">
    <citation type="journal article" date="2001" name="RNA">
        <title>The DEAD box helicase, Dhh1p, functions in mRNA decapping and interacts with both the decapping and deadenylase complexes.</title>
        <authorList>
            <person name="Coller J.M."/>
            <person name="Tucker M."/>
            <person name="Sheth U."/>
            <person name="Valencia-Sanchez M.A."/>
            <person name="Parker R."/>
        </authorList>
    </citation>
    <scope>FUNCTION</scope>
    <scope>INTERACTION WITH DCP1; LSM1; PAT1 AND POP2</scope>
</reference>
<reference key="6">
    <citation type="journal article" date="2002" name="EMBO J.">
        <title>The DEAD box protein Dhh1 stimulates the decapping enzyme Dcp1.</title>
        <authorList>
            <person name="Fischer N."/>
            <person name="Weis K."/>
        </authorList>
    </citation>
    <scope>FUNCTION</scope>
    <scope>SUBCELLULAR LOCATION</scope>
    <scope>INTERACTION WITH KEM1 AND PAT1</scope>
</reference>
<reference key="7">
    <citation type="journal article" date="2002" name="J. Biol. Chem.">
        <title>Interaction between Not1p, a component of the Ccr4-not complex, a global regulator of transcription, and Dhh1p, a putative RNA helicase.</title>
        <authorList>
            <person name="Maillet L."/>
            <person name="Collart M.A."/>
        </authorList>
    </citation>
    <scope>FUNCTION</scope>
    <scope>INTERACTION WITH CDC39</scope>
</reference>
<reference key="8">
    <citation type="journal article" date="2003" name="Nucleic Acids Res.">
        <title>Functional conservation of Dhh1p, a cytoplasmic DExD/H-box protein present in large complexes.</title>
        <authorList>
            <person name="Tseng-Rogenski S.S.-I."/>
            <person name="Chong J.-L."/>
            <person name="Thomas C.B."/>
            <person name="Enomoto S."/>
            <person name="Berman J."/>
            <person name="Chang T.-H."/>
        </authorList>
    </citation>
    <scope>FUNCTION</scope>
    <scope>SUBCELLULAR LOCATION</scope>
    <scope>ASSOCIATION WITH LARGE COMPLEXES</scope>
</reference>
<reference key="9">
    <citation type="journal article" date="2003" name="Nature">
        <title>Global analysis of protein localization in budding yeast.</title>
        <authorList>
            <person name="Huh W.-K."/>
            <person name="Falvo J.V."/>
            <person name="Gerke L.C."/>
            <person name="Carroll A.S."/>
            <person name="Howson R.W."/>
            <person name="Weissman J.S."/>
            <person name="O'Shea E.K."/>
        </authorList>
    </citation>
    <scope>SUBCELLULAR LOCATION [LARGE SCALE ANALYSIS]</scope>
</reference>
<reference key="10">
    <citation type="journal article" date="2003" name="Nature">
        <title>Global analysis of protein expression in yeast.</title>
        <authorList>
            <person name="Ghaemmaghami S."/>
            <person name="Huh W.-K."/>
            <person name="Bower K."/>
            <person name="Howson R.W."/>
            <person name="Belle A."/>
            <person name="Dephoure N."/>
            <person name="O'Shea E.K."/>
            <person name="Weissman J.S."/>
        </authorList>
    </citation>
    <scope>LEVEL OF PROTEIN EXPRESSION [LARGE SCALE ANALYSIS]</scope>
</reference>
<reference key="11">
    <citation type="journal article" date="2003" name="Science">
        <title>Decapping and decay of messenger RNA occur in cytoplasmic processing bodies.</title>
        <authorList>
            <person name="Sheth U."/>
            <person name="Parker R."/>
        </authorList>
    </citation>
    <scope>FUNCTION</scope>
    <scope>SUBCELLULAR LOCATION</scope>
</reference>
<reference key="12">
    <citation type="journal article" date="2004" name="Genetics">
        <title>An essential role for the Saccharomyces cerevisiae DEAD-box helicase DHH1 in G1/S DNA-damage checkpoint recovery.</title>
        <authorList>
            <person name="Bergkessel M."/>
            <person name="Reese J.C."/>
        </authorList>
    </citation>
    <scope>FUNCTION</scope>
</reference>
<reference key="13">
    <citation type="journal article" date="2005" name="RNA">
        <title>Processing bodies require RNA for assembly and contain nontranslating mRNAs.</title>
        <authorList>
            <person name="Teixeira D."/>
            <person name="Sheth U."/>
            <person name="Valencia-Sanchez M.A."/>
            <person name="Brengues M."/>
            <person name="Parker R."/>
        </authorList>
    </citation>
    <scope>FUNCTION</scope>
</reference>
<reference key="14">
    <citation type="journal article" date="2005" name="EMBO J.">
        <title>The yeast EDC1 mRNA undergoes deadenylation-independent decapping stimulated by Not2p, Not4p, and Not5p.</title>
        <authorList>
            <person name="Muhlrad D."/>
            <person name="Parker R."/>
        </authorList>
    </citation>
    <scope>FUNCTION</scope>
    <scope>SUBCELLULAR LOCATION</scope>
</reference>
<reference key="15">
    <citation type="journal article" date="2008" name="Mol. Cell. Proteomics">
        <title>A multidimensional chromatography technology for in-depth phosphoproteome analysis.</title>
        <authorList>
            <person name="Albuquerque C.P."/>
            <person name="Smolka M.B."/>
            <person name="Payne S.H."/>
            <person name="Bafna V."/>
            <person name="Eng J."/>
            <person name="Zhou H."/>
        </authorList>
    </citation>
    <scope>IDENTIFICATION BY MASS SPECTROMETRY [LARGE SCALE ANALYSIS]</scope>
</reference>
<reference key="16">
    <citation type="journal article" date="2005" name="RNA">
        <title>Crystal structure and functional analysis of DEAD-box protein Dhh1p.</title>
        <authorList>
            <person name="Cheng Z."/>
            <person name="Coller J.M."/>
            <person name="Parker R."/>
            <person name="Song H."/>
        </authorList>
    </citation>
    <scope>X-RAY CRYSTALLOGRAPHY (2.1 ANGSTROMS) OF 31-425</scope>
    <scope>MUTAGENESIS OF ARG-89; LYS-91; ASP-195; GLU-196; ARG-345; GLY-346; HIS-369 AND ARG-370</scope>
</reference>
<reference key="17">
    <citation type="journal article" date="2010" name="Mol. Cell">
        <title>Initiation of the TORC1-regulated G0 program requires Igo1/2, which license specific mRNAs to evade degradation via the 5'-3' mRNA decay pathway.</title>
        <authorList>
            <person name="Talarek N."/>
            <person name="Cameroni E."/>
            <person name="Jaquenoud M."/>
            <person name="Luo X."/>
            <person name="Bontron S."/>
            <person name="Lippman S."/>
            <person name="Devgan G."/>
            <person name="Snyder M."/>
            <person name="Broach J.R."/>
            <person name="De Virgilio C."/>
        </authorList>
    </citation>
    <scope>INTERACTION WITH IGO1</scope>
</reference>
<reference key="18">
    <citation type="journal article" date="2015" name="Nat. Cell Biol.">
        <title>A conserved mechanism of TOR-dependent RCK-mediated mRNA degradation regulates autophagy.</title>
        <authorList>
            <person name="Hu G."/>
            <person name="McQuiston T."/>
            <person name="Bernard A."/>
            <person name="Park Y.D."/>
            <person name="Qiu J."/>
            <person name="Vural A."/>
            <person name="Zhang N."/>
            <person name="Waterman S.R."/>
            <person name="Blewett N.H."/>
            <person name="Myers T.G."/>
            <person name="Maraia R.J."/>
            <person name="Kehrl J.H."/>
            <person name="Uzel G."/>
            <person name="Klionsky D.J."/>
            <person name="Williamson P.R."/>
        </authorList>
    </citation>
    <scope>FUNCTION</scope>
    <scope>RNA-BINDING</scope>
    <scope>DISRUPTION PHENOTYPE</scope>
</reference>
<dbReference type="EC" id="3.6.4.13" evidence="19"/>
<dbReference type="EMBL" id="X66057">
    <property type="protein sequence ID" value="CAA46853.1"/>
    <property type="molecule type" value="Genomic_DNA"/>
</dbReference>
<dbReference type="EMBL" id="Z67750">
    <property type="protein sequence ID" value="CAA91586.1"/>
    <property type="molecule type" value="Genomic_DNA"/>
</dbReference>
<dbReference type="EMBL" id="Z74208">
    <property type="protein sequence ID" value="CAA98734.1"/>
    <property type="molecule type" value="Genomic_DNA"/>
</dbReference>
<dbReference type="EMBL" id="BK006938">
    <property type="protein sequence ID" value="DAA11700.1"/>
    <property type="molecule type" value="Genomic_DNA"/>
</dbReference>
<dbReference type="PIR" id="S31229">
    <property type="entry name" value="S31229"/>
</dbReference>
<dbReference type="RefSeq" id="NP_010121.1">
    <property type="nucleotide sequence ID" value="NM_001180220.1"/>
</dbReference>
<dbReference type="PDB" id="1S2M">
    <property type="method" value="X-ray"/>
    <property type="resolution" value="2.10 A"/>
    <property type="chains" value="A=31-425"/>
</dbReference>
<dbReference type="PDB" id="4BRU">
    <property type="method" value="X-ray"/>
    <property type="resolution" value="3.24 A"/>
    <property type="chains" value="A=46-422"/>
</dbReference>
<dbReference type="PDB" id="4BRW">
    <property type="method" value="X-ray"/>
    <property type="resolution" value="2.80 A"/>
    <property type="chains" value="A=46-422"/>
</dbReference>
<dbReference type="PDBsum" id="1S2M"/>
<dbReference type="PDBsum" id="4BRU"/>
<dbReference type="PDBsum" id="4BRW"/>
<dbReference type="SMR" id="P39517"/>
<dbReference type="BioGRID" id="31903">
    <property type="interactions" value="3633"/>
</dbReference>
<dbReference type="DIP" id="DIP-1243N"/>
<dbReference type="FunCoup" id="P39517">
    <property type="interactions" value="1644"/>
</dbReference>
<dbReference type="IntAct" id="P39517">
    <property type="interactions" value="50"/>
</dbReference>
<dbReference type="MINT" id="P39517"/>
<dbReference type="STRING" id="4932.YDL160C"/>
<dbReference type="iPTMnet" id="P39517"/>
<dbReference type="PaxDb" id="4932-YDL160C"/>
<dbReference type="PeptideAtlas" id="P39517"/>
<dbReference type="EnsemblFungi" id="YDL160C_mRNA">
    <property type="protein sequence ID" value="YDL160C"/>
    <property type="gene ID" value="YDL160C"/>
</dbReference>
<dbReference type="GeneID" id="851394"/>
<dbReference type="KEGG" id="sce:YDL160C"/>
<dbReference type="AGR" id="SGD:S000002319"/>
<dbReference type="SGD" id="S000002319">
    <property type="gene designation" value="DHH1"/>
</dbReference>
<dbReference type="VEuPathDB" id="FungiDB:YDL160C"/>
<dbReference type="eggNOG" id="KOG0326">
    <property type="taxonomic scope" value="Eukaryota"/>
</dbReference>
<dbReference type="GeneTree" id="ENSGT00940000170366"/>
<dbReference type="HOGENOM" id="CLU_003041_30_0_1"/>
<dbReference type="InParanoid" id="P39517"/>
<dbReference type="OMA" id="TYEDRHT"/>
<dbReference type="OrthoDB" id="10265785at2759"/>
<dbReference type="BioCyc" id="YEAST:G3O-29554-MONOMER"/>
<dbReference type="Reactome" id="R-SCE-430039">
    <property type="pathway name" value="mRNA decay by 5' to 3' exoribonuclease"/>
</dbReference>
<dbReference type="BioGRID-ORCS" id="851394">
    <property type="hits" value="1 hit in 10 CRISPR screens"/>
</dbReference>
<dbReference type="CD-CODE" id="12F82FB5">
    <property type="entry name" value="Synthetic Condensate 000142"/>
</dbReference>
<dbReference type="CD-CODE" id="1D5AA081">
    <property type="entry name" value="Synthetic Condensate 000123"/>
</dbReference>
<dbReference type="CD-CODE" id="A771B61B">
    <property type="entry name" value="Synthetic Condensate 000236"/>
</dbReference>
<dbReference type="CD-CODE" id="A777E0F8">
    <property type="entry name" value="P-body"/>
</dbReference>
<dbReference type="CD-CODE" id="D9514D20">
    <property type="entry name" value="Synthetic Condensate 000130"/>
</dbReference>
<dbReference type="CD-CODE" id="DFF57E3B">
    <property type="entry name" value="Synthetic Condensate 000241"/>
</dbReference>
<dbReference type="CD-CODE" id="E03F929F">
    <property type="entry name" value="Stress granule"/>
</dbReference>
<dbReference type="EvolutionaryTrace" id="P39517"/>
<dbReference type="PRO" id="PR:P39517"/>
<dbReference type="Proteomes" id="UP000002311">
    <property type="component" value="Chromosome IV"/>
</dbReference>
<dbReference type="RNAct" id="P39517">
    <property type="molecule type" value="protein"/>
</dbReference>
<dbReference type="GO" id="GO:0005737">
    <property type="term" value="C:cytoplasm"/>
    <property type="evidence" value="ECO:0000314"/>
    <property type="project" value="SGD"/>
</dbReference>
<dbReference type="GO" id="GO:0098562">
    <property type="term" value="C:cytoplasmic side of membrane"/>
    <property type="evidence" value="ECO:0000314"/>
    <property type="project" value="SGD"/>
</dbReference>
<dbReference type="GO" id="GO:0010494">
    <property type="term" value="C:cytoplasmic stress granule"/>
    <property type="evidence" value="ECO:0000314"/>
    <property type="project" value="SGD"/>
</dbReference>
<dbReference type="GO" id="GO:0000932">
    <property type="term" value="C:P-body"/>
    <property type="evidence" value="ECO:0000314"/>
    <property type="project" value="SGD"/>
</dbReference>
<dbReference type="GO" id="GO:0005524">
    <property type="term" value="F:ATP binding"/>
    <property type="evidence" value="ECO:0007669"/>
    <property type="project" value="UniProtKB-KW"/>
</dbReference>
<dbReference type="GO" id="GO:0016887">
    <property type="term" value="F:ATP hydrolysis activity"/>
    <property type="evidence" value="ECO:0000315"/>
    <property type="project" value="SGD"/>
</dbReference>
<dbReference type="GO" id="GO:0003682">
    <property type="term" value="F:chromatin binding"/>
    <property type="evidence" value="ECO:0000314"/>
    <property type="project" value="SGD"/>
</dbReference>
<dbReference type="GO" id="GO:0003729">
    <property type="term" value="F:mRNA binding"/>
    <property type="evidence" value="ECO:0000314"/>
    <property type="project" value="SGD"/>
</dbReference>
<dbReference type="GO" id="GO:0003724">
    <property type="term" value="F:RNA helicase activity"/>
    <property type="evidence" value="ECO:0000250"/>
    <property type="project" value="SGD"/>
</dbReference>
<dbReference type="GO" id="GO:0042149">
    <property type="term" value="P:cellular response to glucose starvation"/>
    <property type="evidence" value="ECO:0000315"/>
    <property type="project" value="SGD"/>
</dbReference>
<dbReference type="GO" id="GO:0006995">
    <property type="term" value="P:cellular response to nitrogen starvation"/>
    <property type="evidence" value="ECO:0000315"/>
    <property type="project" value="SGD"/>
</dbReference>
<dbReference type="GO" id="GO:0000290">
    <property type="term" value="P:deadenylation-dependent decapping of nuclear-transcribed mRNA"/>
    <property type="evidence" value="ECO:0000315"/>
    <property type="project" value="SGD"/>
</dbReference>
<dbReference type="GO" id="GO:0030447">
    <property type="term" value="P:filamentous growth"/>
    <property type="evidence" value="ECO:0000315"/>
    <property type="project" value="SGD"/>
</dbReference>
<dbReference type="GO" id="GO:0036267">
    <property type="term" value="P:invasive filamentous growth"/>
    <property type="evidence" value="ECO:0000315"/>
    <property type="project" value="SGD"/>
</dbReference>
<dbReference type="GO" id="GO:0006397">
    <property type="term" value="P:mRNA processing"/>
    <property type="evidence" value="ECO:0007669"/>
    <property type="project" value="UniProtKB-KW"/>
</dbReference>
<dbReference type="GO" id="GO:0051028">
    <property type="term" value="P:mRNA transport"/>
    <property type="evidence" value="ECO:0007669"/>
    <property type="project" value="UniProtKB-KW"/>
</dbReference>
<dbReference type="GO" id="GO:0017148">
    <property type="term" value="P:negative regulation of translation"/>
    <property type="evidence" value="ECO:0000315"/>
    <property type="project" value="SGD"/>
</dbReference>
<dbReference type="GO" id="GO:0045900">
    <property type="term" value="P:negative regulation of translational elongation"/>
    <property type="evidence" value="ECO:0000315"/>
    <property type="project" value="SGD"/>
</dbReference>
<dbReference type="GO" id="GO:0033962">
    <property type="term" value="P:P-body assembly"/>
    <property type="evidence" value="ECO:0000315"/>
    <property type="project" value="SGD"/>
</dbReference>
<dbReference type="GO" id="GO:0045727">
    <property type="term" value="P:positive regulation of translation"/>
    <property type="evidence" value="ECO:0000315"/>
    <property type="project" value="SGD"/>
</dbReference>
<dbReference type="GO" id="GO:0007124">
    <property type="term" value="P:pseudohyphal growth"/>
    <property type="evidence" value="ECO:0000315"/>
    <property type="project" value="SGD"/>
</dbReference>
<dbReference type="GO" id="GO:0010603">
    <property type="term" value="P:regulation of cytoplasmic mRNA processing body assembly"/>
    <property type="evidence" value="ECO:0000314"/>
    <property type="project" value="SGD"/>
</dbReference>
<dbReference type="GO" id="GO:0000749">
    <property type="term" value="P:response to pheromone triggering conjugation with cellular fusion"/>
    <property type="evidence" value="ECO:0000315"/>
    <property type="project" value="SGD"/>
</dbReference>
<dbReference type="GO" id="GO:0034063">
    <property type="term" value="P:stress granule assembly"/>
    <property type="evidence" value="ECO:0000315"/>
    <property type="project" value="SGD"/>
</dbReference>
<dbReference type="CDD" id="cd17940">
    <property type="entry name" value="DEADc_DDX6"/>
    <property type="match status" value="1"/>
</dbReference>
<dbReference type="CDD" id="cd18787">
    <property type="entry name" value="SF2_C_DEAD"/>
    <property type="match status" value="1"/>
</dbReference>
<dbReference type="FunFam" id="3.40.50.300:FF:000114">
    <property type="entry name" value="ATP-dependent RNA helicase DDX6"/>
    <property type="match status" value="1"/>
</dbReference>
<dbReference type="FunFam" id="3.40.50.300:FF:000364">
    <property type="entry name" value="ATP-dependent RNA helicase DDX6"/>
    <property type="match status" value="1"/>
</dbReference>
<dbReference type="Gene3D" id="3.40.50.300">
    <property type="entry name" value="P-loop containing nucleotide triphosphate hydrolases"/>
    <property type="match status" value="2"/>
</dbReference>
<dbReference type="InterPro" id="IPR011545">
    <property type="entry name" value="DEAD/DEAH_box_helicase_dom"/>
</dbReference>
<dbReference type="InterPro" id="IPR014001">
    <property type="entry name" value="Helicase_ATP-bd"/>
</dbReference>
<dbReference type="InterPro" id="IPR001650">
    <property type="entry name" value="Helicase_C-like"/>
</dbReference>
<dbReference type="InterPro" id="IPR027417">
    <property type="entry name" value="P-loop_NTPase"/>
</dbReference>
<dbReference type="InterPro" id="IPR000629">
    <property type="entry name" value="RNA-helicase_DEAD-box_CS"/>
</dbReference>
<dbReference type="InterPro" id="IPR014014">
    <property type="entry name" value="RNA_helicase_DEAD_Q_motif"/>
</dbReference>
<dbReference type="PANTHER" id="PTHR47960">
    <property type="entry name" value="DEAD-BOX ATP-DEPENDENT RNA HELICASE 50"/>
    <property type="match status" value="1"/>
</dbReference>
<dbReference type="Pfam" id="PF00270">
    <property type="entry name" value="DEAD"/>
    <property type="match status" value="1"/>
</dbReference>
<dbReference type="Pfam" id="PF00271">
    <property type="entry name" value="Helicase_C"/>
    <property type="match status" value="1"/>
</dbReference>
<dbReference type="SMART" id="SM00487">
    <property type="entry name" value="DEXDc"/>
    <property type="match status" value="1"/>
</dbReference>
<dbReference type="SMART" id="SM00490">
    <property type="entry name" value="HELICc"/>
    <property type="match status" value="1"/>
</dbReference>
<dbReference type="SUPFAM" id="SSF52540">
    <property type="entry name" value="P-loop containing nucleoside triphosphate hydrolases"/>
    <property type="match status" value="1"/>
</dbReference>
<dbReference type="PROSITE" id="PS00039">
    <property type="entry name" value="DEAD_ATP_HELICASE"/>
    <property type="match status" value="1"/>
</dbReference>
<dbReference type="PROSITE" id="PS51192">
    <property type="entry name" value="HELICASE_ATP_BIND_1"/>
    <property type="match status" value="1"/>
</dbReference>
<dbReference type="PROSITE" id="PS51194">
    <property type="entry name" value="HELICASE_CTER"/>
    <property type="match status" value="1"/>
</dbReference>
<dbReference type="PROSITE" id="PS51195">
    <property type="entry name" value="Q_MOTIF"/>
    <property type="match status" value="1"/>
</dbReference>
<organism>
    <name type="scientific">Saccharomyces cerevisiae (strain ATCC 204508 / S288c)</name>
    <name type="common">Baker's yeast</name>
    <dbReference type="NCBI Taxonomy" id="559292"/>
    <lineage>
        <taxon>Eukaryota</taxon>
        <taxon>Fungi</taxon>
        <taxon>Dikarya</taxon>
        <taxon>Ascomycota</taxon>
        <taxon>Saccharomycotina</taxon>
        <taxon>Saccharomycetes</taxon>
        <taxon>Saccharomycetales</taxon>
        <taxon>Saccharomycetaceae</taxon>
        <taxon>Saccharomyces</taxon>
    </lineage>
</organism>
<feature type="chain" id="PRO_0000055044" description="ATP-dependent RNA helicase DHH1">
    <location>
        <begin position="1"/>
        <end position="506"/>
    </location>
</feature>
<feature type="domain" description="Helicase ATP-binding" evidence="1">
    <location>
        <begin position="77"/>
        <end position="247"/>
    </location>
</feature>
<feature type="domain" description="Helicase C-terminal" evidence="2">
    <location>
        <begin position="257"/>
        <end position="417"/>
    </location>
</feature>
<feature type="region of interest" description="Disordered" evidence="3">
    <location>
        <begin position="1"/>
        <end position="20"/>
    </location>
</feature>
<feature type="region of interest" description="Disordered" evidence="3">
    <location>
        <begin position="459"/>
        <end position="506"/>
    </location>
</feature>
<feature type="short sequence motif" description="Q motif">
    <location>
        <begin position="46"/>
        <end position="74"/>
    </location>
</feature>
<feature type="short sequence motif" description="DEAD box">
    <location>
        <begin position="195"/>
        <end position="198"/>
    </location>
</feature>
<feature type="compositionally biased region" description="Low complexity" evidence="3">
    <location>
        <begin position="1"/>
        <end position="16"/>
    </location>
</feature>
<feature type="binding site" evidence="1">
    <location>
        <begin position="90"/>
        <end position="97"/>
    </location>
    <ligand>
        <name>ATP</name>
        <dbReference type="ChEBI" id="CHEBI:30616"/>
    </ligand>
</feature>
<feature type="mutagenesis site" description="Leads to mRNA turnover defect and no growth at 37 degrees Celsius; when associated with A-91. Impairs RNA binding in vitro." evidence="14">
    <original>R</original>
    <variation>A</variation>
    <location>
        <position position="89"/>
    </location>
</feature>
<feature type="mutagenesis site" description="Leads to mRNA turnover defect and no growth at 37 degrees Celsius; when associated with A-89. Impairs RNA binding in vitro." evidence="14">
    <original>K</original>
    <variation>A</variation>
    <location>
        <position position="91"/>
    </location>
</feature>
<feature type="mutagenesis site" description="Leads to mRNA turnover defect and no growth at 37 degrees Celsius." evidence="14">
    <original>D</original>
    <variation>A</variation>
    <location>
        <position position="195"/>
    </location>
</feature>
<feature type="mutagenesis site" description="Leads to mRNA turnover defect and no growth at 37 degrees Celsius." evidence="14">
    <original>E</original>
    <variation>A</variation>
    <location>
        <position position="196"/>
    </location>
</feature>
<feature type="mutagenesis site" description="Leads to mRNA turnover defect and no growth at 37 degrees Celsius. Impairs RNA binding in vitro." evidence="14">
    <original>R</original>
    <variation>A</variation>
    <location>
        <position position="345"/>
    </location>
</feature>
<feature type="mutagenesis site" description="Leads to mRNA turnover defect and no growth at 37 degrees Celsius. Impairs RNA binding in vitro." evidence="14">
    <original>G</original>
    <variation>A</variation>
    <location>
        <position position="346"/>
    </location>
</feature>
<feature type="mutagenesis site" description="Leads to mRNA turnover defect and no growth at 37 degrees Celsius." evidence="14">
    <original>H</original>
    <variation>A</variation>
    <location>
        <position position="369"/>
    </location>
</feature>
<feature type="mutagenesis site" description="Leads to mRNA turnover defect and no growth at 37 degrees Celsius. Impairs RNA binding in vitro." evidence="14">
    <original>R</original>
    <variation>A</variation>
    <location>
        <position position="370"/>
    </location>
</feature>
<feature type="helix" evidence="21">
    <location>
        <begin position="48"/>
        <end position="51"/>
    </location>
</feature>
<feature type="helix" evidence="21">
    <location>
        <begin position="55"/>
        <end position="63"/>
    </location>
</feature>
<feature type="helix" evidence="21">
    <location>
        <begin position="71"/>
        <end position="82"/>
    </location>
</feature>
<feature type="strand" evidence="21">
    <location>
        <begin position="86"/>
        <end position="89"/>
    </location>
</feature>
<feature type="helix" evidence="21">
    <location>
        <begin position="96"/>
        <end position="107"/>
    </location>
</feature>
<feature type="strand" evidence="21">
    <location>
        <begin position="117"/>
        <end position="120"/>
    </location>
</feature>
<feature type="helix" evidence="21">
    <location>
        <begin position="124"/>
        <end position="137"/>
    </location>
</feature>
<feature type="turn" evidence="21">
    <location>
        <begin position="138"/>
        <end position="142"/>
    </location>
</feature>
<feature type="strand" evidence="21">
    <location>
        <begin position="145"/>
        <end position="148"/>
    </location>
</feature>
<feature type="strand" evidence="21">
    <location>
        <begin position="150"/>
        <end position="152"/>
    </location>
</feature>
<feature type="helix" evidence="21">
    <location>
        <begin position="154"/>
        <end position="160"/>
    </location>
</feature>
<feature type="strand" evidence="21">
    <location>
        <begin position="166"/>
        <end position="170"/>
    </location>
</feature>
<feature type="helix" evidence="21">
    <location>
        <begin position="172"/>
        <end position="180"/>
    </location>
</feature>
<feature type="strand" evidence="21">
    <location>
        <begin position="191"/>
        <end position="196"/>
    </location>
</feature>
<feature type="helix" evidence="21">
    <location>
        <begin position="197"/>
        <end position="200"/>
    </location>
</feature>
<feature type="helix" evidence="21">
    <location>
        <begin position="203"/>
        <end position="213"/>
    </location>
</feature>
<feature type="strand" evidence="21">
    <location>
        <begin position="221"/>
        <end position="227"/>
    </location>
</feature>
<feature type="helix" evidence="21">
    <location>
        <begin position="231"/>
        <end position="240"/>
    </location>
</feature>
<feature type="strand" evidence="21">
    <location>
        <begin position="245"/>
        <end position="248"/>
    </location>
</feature>
<feature type="strand" evidence="21">
    <location>
        <begin position="258"/>
        <end position="264"/>
    </location>
</feature>
<feature type="helix" evidence="21">
    <location>
        <begin position="267"/>
        <end position="269"/>
    </location>
</feature>
<feature type="helix" evidence="21">
    <location>
        <begin position="270"/>
        <end position="280"/>
    </location>
</feature>
<feature type="strand" evidence="21">
    <location>
        <begin position="284"/>
        <end position="289"/>
    </location>
</feature>
<feature type="helix" evidence="21">
    <location>
        <begin position="293"/>
        <end position="306"/>
    </location>
</feature>
<feature type="strand" evidence="21">
    <location>
        <begin position="310"/>
        <end position="313"/>
    </location>
</feature>
<feature type="helix" evidence="21">
    <location>
        <begin position="319"/>
        <end position="330"/>
    </location>
</feature>
<feature type="strand" evidence="21">
    <location>
        <begin position="333"/>
        <end position="341"/>
    </location>
</feature>
<feature type="strand" evidence="21">
    <location>
        <begin position="343"/>
        <end position="346"/>
    </location>
</feature>
<feature type="strand" evidence="21">
    <location>
        <begin position="352"/>
        <end position="359"/>
    </location>
</feature>
<feature type="helix" evidence="21">
    <location>
        <begin position="364"/>
        <end position="371"/>
    </location>
</feature>
<feature type="strand" evidence="21">
    <location>
        <begin position="373"/>
        <end position="375"/>
    </location>
</feature>
<feature type="strand" evidence="21">
    <location>
        <begin position="381"/>
        <end position="387"/>
    </location>
</feature>
<feature type="helix" evidence="21">
    <location>
        <begin position="389"/>
        <end position="391"/>
    </location>
</feature>
<feature type="helix" evidence="21">
    <location>
        <begin position="392"/>
        <end position="402"/>
    </location>
</feature>
<feature type="strand" evidence="22">
    <location>
        <begin position="406"/>
        <end position="408"/>
    </location>
</feature>
<feature type="helix" evidence="21">
    <location>
        <begin position="415"/>
        <end position="417"/>
    </location>
</feature>
<proteinExistence type="evidence at protein level"/>
<evidence type="ECO:0000255" key="1">
    <source>
        <dbReference type="PROSITE-ProRule" id="PRU00541"/>
    </source>
</evidence>
<evidence type="ECO:0000255" key="2">
    <source>
        <dbReference type="PROSITE-ProRule" id="PRU00542"/>
    </source>
</evidence>
<evidence type="ECO:0000256" key="3">
    <source>
        <dbReference type="SAM" id="MobiDB-lite"/>
    </source>
</evidence>
<evidence type="ECO:0000269" key="4">
    <source>
    </source>
</evidence>
<evidence type="ECO:0000269" key="5">
    <source>
    </source>
</evidence>
<evidence type="ECO:0000269" key="6">
    <source>
    </source>
</evidence>
<evidence type="ECO:0000269" key="7">
    <source>
    </source>
</evidence>
<evidence type="ECO:0000269" key="8">
    <source>
    </source>
</evidence>
<evidence type="ECO:0000269" key="9">
    <source>
    </source>
</evidence>
<evidence type="ECO:0000269" key="10">
    <source>
    </source>
</evidence>
<evidence type="ECO:0000269" key="11">
    <source>
    </source>
</evidence>
<evidence type="ECO:0000269" key="12">
    <source>
    </source>
</evidence>
<evidence type="ECO:0000269" key="13">
    <source>
    </source>
</evidence>
<evidence type="ECO:0000269" key="14">
    <source>
    </source>
</evidence>
<evidence type="ECO:0000269" key="15">
    <source>
    </source>
</evidence>
<evidence type="ECO:0000269" key="16">
    <source>
    </source>
</evidence>
<evidence type="ECO:0000269" key="17">
    <source>
    </source>
</evidence>
<evidence type="ECO:0000303" key="18">
    <source>
    </source>
</evidence>
<evidence type="ECO:0000305" key="19"/>
<evidence type="ECO:0000312" key="20">
    <source>
        <dbReference type="SGD" id="S000002319"/>
    </source>
</evidence>
<evidence type="ECO:0007829" key="21">
    <source>
        <dbReference type="PDB" id="1S2M"/>
    </source>
</evidence>
<evidence type="ECO:0007829" key="22">
    <source>
        <dbReference type="PDB" id="4BRW"/>
    </source>
</evidence>
<accession>P39517</accession>
<accession>D6VRJ0</accession>